<sequence length="433" mass="46366">MRMIDIIEKKRDGHTLTTEEINFFIDGYVKGDIPDYQASSLAMAIYFQDMNDDERAALTMAMVNSGDMIDLSDIKGVKVDKHSTGGVGDTTTLVLAPLVAAVDVPVAKMSGRGLGHTGGTIDKLEAIDGFHVEIDEATFVKLVNENKVAVVGQSGNLTPADKKLYALRDVTGTVNSIPLIASSIMSKKIAAGADAIVLDVKTGSGAFMKTLEDAEALAHAMVRIGNNVGRNTMAIISDMNQPLGRAIGNALELQEAIDTLKGQGPKDLTELVLTLGSQMVVLANKAETLEEARALLIEAINSGAALEKFKTFIKNQGGDETVIDHPERLPQAQYQIEYKAKKSGYVTELVSNDIGVASMMLGAGRLTKEDDIDLAVGIVLNKKIGDKVEEGESLLTIHSNRQDVDDVVKKLDSSITIADHVVSPTLIHKIITE</sequence>
<accession>Q7A4D0</accession>
<protein>
    <recommendedName>
        <fullName>Pyrimidine-nucleoside phosphorylase</fullName>
        <shortName>PYNP</shortName>
        <shortName>Py-NPase</shortName>
        <ecNumber>2.4.2.2</ecNumber>
    </recommendedName>
</protein>
<evidence type="ECO:0000250" key="1">
    <source>
        <dbReference type="UniProtKB" id="P77836"/>
    </source>
</evidence>
<evidence type="ECO:0000305" key="2"/>
<name>PDP_STAAN</name>
<reference key="1">
    <citation type="journal article" date="2001" name="Lancet">
        <title>Whole genome sequencing of meticillin-resistant Staphylococcus aureus.</title>
        <authorList>
            <person name="Kuroda M."/>
            <person name="Ohta T."/>
            <person name="Uchiyama I."/>
            <person name="Baba T."/>
            <person name="Yuzawa H."/>
            <person name="Kobayashi I."/>
            <person name="Cui L."/>
            <person name="Oguchi A."/>
            <person name="Aoki K."/>
            <person name="Nagai Y."/>
            <person name="Lian J.-Q."/>
            <person name="Ito T."/>
            <person name="Kanamori M."/>
            <person name="Matsumaru H."/>
            <person name="Maruyama A."/>
            <person name="Murakami H."/>
            <person name="Hosoyama A."/>
            <person name="Mizutani-Ui Y."/>
            <person name="Takahashi N.K."/>
            <person name="Sawano T."/>
            <person name="Inoue R."/>
            <person name="Kaito C."/>
            <person name="Sekimizu K."/>
            <person name="Hirakawa H."/>
            <person name="Kuhara S."/>
            <person name="Goto S."/>
            <person name="Yabuzaki J."/>
            <person name="Kanehisa M."/>
            <person name="Yamashita A."/>
            <person name="Oshima K."/>
            <person name="Furuya K."/>
            <person name="Yoshino C."/>
            <person name="Shiba T."/>
            <person name="Hattori M."/>
            <person name="Ogasawara N."/>
            <person name="Hayashi H."/>
            <person name="Hiramatsu K."/>
        </authorList>
    </citation>
    <scope>NUCLEOTIDE SEQUENCE [LARGE SCALE GENOMIC DNA]</scope>
    <source>
        <strain>N315</strain>
    </source>
</reference>
<reference key="2">
    <citation type="journal article" date="2005" name="J. Microbiol. Methods">
        <title>Correlation of proteomic and transcriptomic profiles of Staphylococcus aureus during the post-exponential phase of growth.</title>
        <authorList>
            <person name="Scherl A."/>
            <person name="Francois P."/>
            <person name="Bento M."/>
            <person name="Deshusses J.M."/>
            <person name="Charbonnier Y."/>
            <person name="Converset V."/>
            <person name="Huyghe A."/>
            <person name="Walter N."/>
            <person name="Hoogland C."/>
            <person name="Appel R.D."/>
            <person name="Sanchez J.-C."/>
            <person name="Zimmermann-Ivol C.G."/>
            <person name="Corthals G.L."/>
            <person name="Hochstrasser D.F."/>
            <person name="Schrenzel J."/>
        </authorList>
    </citation>
    <scope>IDENTIFICATION BY MASS SPECTROMETRY</scope>
    <source>
        <strain>N315</strain>
    </source>
</reference>
<reference key="3">
    <citation type="submission" date="2007-10" db="UniProtKB">
        <title>Shotgun proteomic analysis of total and membrane protein extracts of S. aureus strain N315.</title>
        <authorList>
            <person name="Vaezzadeh A.R."/>
            <person name="Deshusses J."/>
            <person name="Lescuyer P."/>
            <person name="Hochstrasser D.F."/>
        </authorList>
    </citation>
    <scope>IDENTIFICATION BY MASS SPECTROMETRY [LARGE SCALE ANALYSIS]</scope>
    <source>
        <strain>N315</strain>
    </source>
</reference>
<feature type="chain" id="PRO_0000269535" description="Pyrimidine-nucleoside phosphorylase">
    <location>
        <begin position="1"/>
        <end position="433"/>
    </location>
</feature>
<feature type="binding site" evidence="1">
    <location>
        <begin position="81"/>
        <end position="83"/>
    </location>
    <ligand>
        <name>phosphate</name>
        <dbReference type="ChEBI" id="CHEBI:43474"/>
    </ligand>
</feature>
<feature type="binding site" evidence="1">
    <location>
        <position position="88"/>
    </location>
    <ligand>
        <name>K(+)</name>
        <dbReference type="ChEBI" id="CHEBI:29103"/>
    </ligand>
</feature>
<feature type="binding site" evidence="1">
    <location>
        <position position="90"/>
    </location>
    <ligand>
        <name>K(+)</name>
        <dbReference type="ChEBI" id="CHEBI:29103"/>
    </ligand>
</feature>
<feature type="binding site" evidence="1">
    <location>
        <position position="92"/>
    </location>
    <ligand>
        <name>phosphate</name>
        <dbReference type="ChEBI" id="CHEBI:43474"/>
    </ligand>
</feature>
<feature type="binding site" evidence="1">
    <location>
        <begin position="108"/>
        <end position="110"/>
    </location>
    <ligand>
        <name>phosphate</name>
        <dbReference type="ChEBI" id="CHEBI:43474"/>
    </ligand>
</feature>
<feature type="binding site" evidence="1">
    <location>
        <position position="120"/>
    </location>
    <ligand>
        <name>phosphate</name>
        <dbReference type="ChEBI" id="CHEBI:43474"/>
    </ligand>
</feature>
<feature type="binding site" evidence="1">
    <location>
        <position position="168"/>
    </location>
    <ligand>
        <name>substrate</name>
    </ligand>
</feature>
<feature type="binding site" evidence="1">
    <location>
        <position position="187"/>
    </location>
    <ligand>
        <name>substrate</name>
    </ligand>
</feature>
<feature type="binding site" evidence="1">
    <location>
        <position position="243"/>
    </location>
    <ligand>
        <name>K(+)</name>
        <dbReference type="ChEBI" id="CHEBI:29103"/>
    </ligand>
</feature>
<feature type="binding site" evidence="1">
    <location>
        <position position="246"/>
    </location>
    <ligand>
        <name>K(+)</name>
        <dbReference type="ChEBI" id="CHEBI:29103"/>
    </ligand>
</feature>
<feature type="binding site" evidence="1">
    <location>
        <position position="255"/>
    </location>
    <ligand>
        <name>K(+)</name>
        <dbReference type="ChEBI" id="CHEBI:29103"/>
    </ligand>
</feature>
<organism>
    <name type="scientific">Staphylococcus aureus (strain N315)</name>
    <dbReference type="NCBI Taxonomy" id="158879"/>
    <lineage>
        <taxon>Bacteria</taxon>
        <taxon>Bacillati</taxon>
        <taxon>Bacillota</taxon>
        <taxon>Bacilli</taxon>
        <taxon>Bacillales</taxon>
        <taxon>Staphylococcaceae</taxon>
        <taxon>Staphylococcus</taxon>
    </lineage>
</organism>
<gene>
    <name type="primary">pdp</name>
    <name type="synonym">pyn</name>
    <name type="ordered locus">SA1938</name>
</gene>
<comment type="function">
    <text evidence="1">Catalyzes phosphorolysis of the pyrimidine nucleosides uridine, thymidine and 2'-deoxyuridine with the formation of the corresponding pyrimidine base and ribose-1-phosphate.</text>
</comment>
<comment type="catalytic activity">
    <reaction evidence="1">
        <text>uridine + phosphate = alpha-D-ribose 1-phosphate + uracil</text>
        <dbReference type="Rhea" id="RHEA:24388"/>
        <dbReference type="ChEBI" id="CHEBI:16704"/>
        <dbReference type="ChEBI" id="CHEBI:17568"/>
        <dbReference type="ChEBI" id="CHEBI:43474"/>
        <dbReference type="ChEBI" id="CHEBI:57720"/>
        <dbReference type="EC" id="2.4.2.2"/>
    </reaction>
</comment>
<comment type="catalytic activity">
    <reaction evidence="1">
        <text>thymidine + phosphate = 2-deoxy-alpha-D-ribose 1-phosphate + thymine</text>
        <dbReference type="Rhea" id="RHEA:16037"/>
        <dbReference type="ChEBI" id="CHEBI:17748"/>
        <dbReference type="ChEBI" id="CHEBI:17821"/>
        <dbReference type="ChEBI" id="CHEBI:43474"/>
        <dbReference type="ChEBI" id="CHEBI:57259"/>
        <dbReference type="EC" id="2.4.2.2"/>
    </reaction>
</comment>
<comment type="catalytic activity">
    <reaction evidence="1">
        <text>2'-deoxyuridine + phosphate = 2-deoxy-alpha-D-ribose 1-phosphate + uracil</text>
        <dbReference type="Rhea" id="RHEA:22824"/>
        <dbReference type="ChEBI" id="CHEBI:16450"/>
        <dbReference type="ChEBI" id="CHEBI:17568"/>
        <dbReference type="ChEBI" id="CHEBI:43474"/>
        <dbReference type="ChEBI" id="CHEBI:57259"/>
        <dbReference type="EC" id="2.4.2.2"/>
    </reaction>
</comment>
<comment type="cofactor">
    <cofactor evidence="1">
        <name>K(+)</name>
        <dbReference type="ChEBI" id="CHEBI:29103"/>
    </cofactor>
    <text evidence="1">Binds 1 K(+) ion per subunit.</text>
</comment>
<comment type="subunit">
    <text evidence="1">Homodimer.</text>
</comment>
<comment type="similarity">
    <text evidence="2">Belongs to the thymidine/pyrimidine-nucleoside phosphorylase family.</text>
</comment>
<comment type="sequence caution" evidence="2">
    <conflict type="erroneous initiation">
        <sequence resource="EMBL-CDS" id="BAB43222"/>
    </conflict>
    <text>Extended N-terminus.</text>
</comment>
<proteinExistence type="evidence at protein level"/>
<keyword id="KW-0328">Glycosyltransferase</keyword>
<keyword id="KW-0479">Metal-binding</keyword>
<keyword id="KW-0630">Potassium</keyword>
<keyword id="KW-0808">Transferase</keyword>
<dbReference type="EC" id="2.4.2.2"/>
<dbReference type="EMBL" id="BA000018">
    <property type="protein sequence ID" value="BAB43222.1"/>
    <property type="status" value="ALT_INIT"/>
    <property type="molecule type" value="Genomic_DNA"/>
</dbReference>
<dbReference type="PIR" id="E90007">
    <property type="entry name" value="E90007"/>
</dbReference>
<dbReference type="RefSeq" id="WP_001242311.1">
    <property type="nucleotide sequence ID" value="NC_002745.2"/>
</dbReference>
<dbReference type="SMR" id="Q7A4D0"/>
<dbReference type="EnsemblBacteria" id="BAB43222">
    <property type="protein sequence ID" value="BAB43222"/>
    <property type="gene ID" value="BAB43222"/>
</dbReference>
<dbReference type="KEGG" id="sau:SA1938"/>
<dbReference type="HOGENOM" id="CLU_025040_0_1_9"/>
<dbReference type="GO" id="GO:0005829">
    <property type="term" value="C:cytosol"/>
    <property type="evidence" value="ECO:0007669"/>
    <property type="project" value="TreeGrafter"/>
</dbReference>
<dbReference type="GO" id="GO:0004645">
    <property type="term" value="F:1,4-alpha-oligoglucan phosphorylase activity"/>
    <property type="evidence" value="ECO:0007669"/>
    <property type="project" value="InterPro"/>
</dbReference>
<dbReference type="GO" id="GO:0047847">
    <property type="term" value="F:deoxyuridine phosphorylase activity"/>
    <property type="evidence" value="ECO:0007669"/>
    <property type="project" value="RHEA"/>
</dbReference>
<dbReference type="GO" id="GO:0046872">
    <property type="term" value="F:metal ion binding"/>
    <property type="evidence" value="ECO:0007669"/>
    <property type="project" value="UniProtKB-KW"/>
</dbReference>
<dbReference type="GO" id="GO:0009032">
    <property type="term" value="F:thymidine phosphorylase activity"/>
    <property type="evidence" value="ECO:0007669"/>
    <property type="project" value="RHEA"/>
</dbReference>
<dbReference type="GO" id="GO:0004850">
    <property type="term" value="F:uridine phosphorylase activity"/>
    <property type="evidence" value="ECO:0007669"/>
    <property type="project" value="RHEA"/>
</dbReference>
<dbReference type="GO" id="GO:0006206">
    <property type="term" value="P:pyrimidine nucleobase metabolic process"/>
    <property type="evidence" value="ECO:0007669"/>
    <property type="project" value="InterPro"/>
</dbReference>
<dbReference type="GO" id="GO:0006213">
    <property type="term" value="P:pyrimidine nucleoside metabolic process"/>
    <property type="evidence" value="ECO:0007669"/>
    <property type="project" value="InterPro"/>
</dbReference>
<dbReference type="FunFam" id="1.20.970.10:FF:000002">
    <property type="entry name" value="Pyrimidine-nucleoside phosphorylase"/>
    <property type="match status" value="1"/>
</dbReference>
<dbReference type="FunFam" id="3.40.1030.10:FF:000003">
    <property type="entry name" value="Pyrimidine-nucleoside phosphorylase"/>
    <property type="match status" value="1"/>
</dbReference>
<dbReference type="Gene3D" id="3.40.1030.10">
    <property type="entry name" value="Nucleoside phosphorylase/phosphoribosyltransferase catalytic domain"/>
    <property type="match status" value="1"/>
</dbReference>
<dbReference type="Gene3D" id="3.90.1170.30">
    <property type="entry name" value="Pyrimidine nucleoside phosphorylase-like, C-terminal domain"/>
    <property type="match status" value="1"/>
</dbReference>
<dbReference type="Gene3D" id="1.20.970.10">
    <property type="entry name" value="Transferase, Pyrimidine Nucleoside Phosphorylase, Chain C"/>
    <property type="match status" value="1"/>
</dbReference>
<dbReference type="InterPro" id="IPR000312">
    <property type="entry name" value="Glycosyl_Trfase_fam3"/>
</dbReference>
<dbReference type="InterPro" id="IPR017459">
    <property type="entry name" value="Glycosyl_Trfase_fam3_N_dom"/>
</dbReference>
<dbReference type="InterPro" id="IPR036320">
    <property type="entry name" value="Glycosyl_Trfase_fam3_N_dom_sf"/>
</dbReference>
<dbReference type="InterPro" id="IPR035902">
    <property type="entry name" value="Nuc_phospho_transferase"/>
</dbReference>
<dbReference type="InterPro" id="IPR036566">
    <property type="entry name" value="PYNP-like_C_sf"/>
</dbReference>
<dbReference type="InterPro" id="IPR013102">
    <property type="entry name" value="PYNP_C"/>
</dbReference>
<dbReference type="InterPro" id="IPR018090">
    <property type="entry name" value="Pyrmidine_PPas_bac/euk"/>
</dbReference>
<dbReference type="InterPro" id="IPR017872">
    <property type="entry name" value="Pyrmidine_PPase_CS"/>
</dbReference>
<dbReference type="InterPro" id="IPR000053">
    <property type="entry name" value="Thymidine/pyrmidine_PPase"/>
</dbReference>
<dbReference type="NCBIfam" id="NF004490">
    <property type="entry name" value="PRK05820.1"/>
    <property type="match status" value="1"/>
</dbReference>
<dbReference type="NCBIfam" id="NF004747">
    <property type="entry name" value="PRK06078.1"/>
    <property type="match status" value="1"/>
</dbReference>
<dbReference type="NCBIfam" id="TIGR02644">
    <property type="entry name" value="Y_phosphoryl"/>
    <property type="match status" value="1"/>
</dbReference>
<dbReference type="PANTHER" id="PTHR10515">
    <property type="entry name" value="THYMIDINE PHOSPHORYLASE"/>
    <property type="match status" value="1"/>
</dbReference>
<dbReference type="PANTHER" id="PTHR10515:SF0">
    <property type="entry name" value="THYMIDINE PHOSPHORYLASE"/>
    <property type="match status" value="1"/>
</dbReference>
<dbReference type="Pfam" id="PF02885">
    <property type="entry name" value="Glycos_trans_3N"/>
    <property type="match status" value="1"/>
</dbReference>
<dbReference type="Pfam" id="PF00591">
    <property type="entry name" value="Glycos_transf_3"/>
    <property type="match status" value="1"/>
</dbReference>
<dbReference type="Pfam" id="PF07831">
    <property type="entry name" value="PYNP_C"/>
    <property type="match status" value="1"/>
</dbReference>
<dbReference type="PIRSF" id="PIRSF000478">
    <property type="entry name" value="TP_PyNP"/>
    <property type="match status" value="1"/>
</dbReference>
<dbReference type="SMART" id="SM00941">
    <property type="entry name" value="PYNP_C"/>
    <property type="match status" value="1"/>
</dbReference>
<dbReference type="SUPFAM" id="SSF52418">
    <property type="entry name" value="Nucleoside phosphorylase/phosphoribosyltransferase catalytic domain"/>
    <property type="match status" value="1"/>
</dbReference>
<dbReference type="SUPFAM" id="SSF47648">
    <property type="entry name" value="Nucleoside phosphorylase/phosphoribosyltransferase N-terminal domain"/>
    <property type="match status" value="1"/>
</dbReference>
<dbReference type="SUPFAM" id="SSF54680">
    <property type="entry name" value="Pyrimidine nucleoside phosphorylase C-terminal domain"/>
    <property type="match status" value="1"/>
</dbReference>
<dbReference type="PROSITE" id="PS00647">
    <property type="entry name" value="THYMID_PHOSPHORYLASE"/>
    <property type="match status" value="1"/>
</dbReference>